<sequence>MSWITPDLIEILLSILKAVVILLVVVTCGAFMSFGERRLLGLFQNRYGPNRVGWGGSLQLVADMIKMFFKEDWIPKFSDRVIFTLAPMIAFTSLLLSFAIVPVSPNWVVADLNIGILFFLMMAGLAVYAVLFAGWSSNNKYSLLGAMRASAQTVSYEVFLGLSLMGVVAQAGSFNMTDIVNNQAHLWNVIPQFFGFVTFAIAGVAVCHRHPFDQPEAEQELADGYHIEYSGMKFGLFFVGEYIGIVTVSALMVTLFFGGWHGPFLPPFVWFALKTAFFMMMFILIRASLPRPRYDQVMSFGWKVCLPLTLINLLVTAAVILWQAQ</sequence>
<accession>Q60010</accession>
<gene>
    <name evidence="1" type="primary">nuoH</name>
    <name type="ordered locus">STM2322</name>
</gene>
<reference key="1">
    <citation type="journal article" date="1997" name="J. Bacteriol.">
        <title>Influence of genes encoding proton-translocating enzymes on suppression of Salmonella typhimurium growth and colonization.</title>
        <authorList>
            <person name="Zhang-Barber L.Z."/>
            <person name="Turner A.K."/>
            <person name="Martin G."/>
            <person name="Fraenkel G."/>
            <person name="Dougan G."/>
            <person name="Barrow P.A."/>
        </authorList>
    </citation>
    <scope>NUCLEOTIDE SEQUENCE [GENOMIC DNA]</scope>
    <source>
        <strain>F98</strain>
    </source>
</reference>
<reference key="2">
    <citation type="journal article" date="2001" name="Nature">
        <title>Complete genome sequence of Salmonella enterica serovar Typhimurium LT2.</title>
        <authorList>
            <person name="McClelland M."/>
            <person name="Sanderson K.E."/>
            <person name="Spieth J."/>
            <person name="Clifton S.W."/>
            <person name="Latreille P."/>
            <person name="Courtney L."/>
            <person name="Porwollik S."/>
            <person name="Ali J."/>
            <person name="Dante M."/>
            <person name="Du F."/>
            <person name="Hou S."/>
            <person name="Layman D."/>
            <person name="Leonard S."/>
            <person name="Nguyen C."/>
            <person name="Scott K."/>
            <person name="Holmes A."/>
            <person name="Grewal N."/>
            <person name="Mulvaney E."/>
            <person name="Ryan E."/>
            <person name="Sun H."/>
            <person name="Florea L."/>
            <person name="Miller W."/>
            <person name="Stoneking T."/>
            <person name="Nhan M."/>
            <person name="Waterston R."/>
            <person name="Wilson R.K."/>
        </authorList>
    </citation>
    <scope>NUCLEOTIDE SEQUENCE [LARGE SCALE GENOMIC DNA]</scope>
    <source>
        <strain>LT2 / SGSC1412 / ATCC 700720</strain>
    </source>
</reference>
<dbReference type="EC" id="7.1.1.-" evidence="1"/>
<dbReference type="EMBL" id="L42521">
    <property type="protein sequence ID" value="AAC37140.1"/>
    <property type="molecule type" value="Genomic_DNA"/>
</dbReference>
<dbReference type="EMBL" id="AE006468">
    <property type="protein sequence ID" value="AAL21223.1"/>
    <property type="molecule type" value="Genomic_DNA"/>
</dbReference>
<dbReference type="RefSeq" id="NP_461264.1">
    <property type="nucleotide sequence ID" value="NC_003197.2"/>
</dbReference>
<dbReference type="RefSeq" id="WP_000118515.1">
    <property type="nucleotide sequence ID" value="NC_003197.2"/>
</dbReference>
<dbReference type="SMR" id="Q60010"/>
<dbReference type="STRING" id="99287.STM2322"/>
<dbReference type="PaxDb" id="99287-STM2322"/>
<dbReference type="GeneID" id="1253844"/>
<dbReference type="GeneID" id="66756771"/>
<dbReference type="KEGG" id="stm:STM2322"/>
<dbReference type="PATRIC" id="fig|99287.12.peg.2459"/>
<dbReference type="HOGENOM" id="CLU_015134_0_1_6"/>
<dbReference type="OMA" id="WSGWASN"/>
<dbReference type="PhylomeDB" id="Q60010"/>
<dbReference type="BioCyc" id="SENT99287:STM2322-MONOMER"/>
<dbReference type="Proteomes" id="UP000001014">
    <property type="component" value="Chromosome"/>
</dbReference>
<dbReference type="GO" id="GO:0005886">
    <property type="term" value="C:plasma membrane"/>
    <property type="evidence" value="ECO:0007669"/>
    <property type="project" value="UniProtKB-SubCell"/>
</dbReference>
<dbReference type="GO" id="GO:0045271">
    <property type="term" value="C:respiratory chain complex I"/>
    <property type="evidence" value="ECO:0000318"/>
    <property type="project" value="GO_Central"/>
</dbReference>
<dbReference type="GO" id="GO:0016655">
    <property type="term" value="F:oxidoreductase activity, acting on NAD(P)H, quinone or similar compound as acceptor"/>
    <property type="evidence" value="ECO:0007669"/>
    <property type="project" value="UniProtKB-UniRule"/>
</dbReference>
<dbReference type="GO" id="GO:0048038">
    <property type="term" value="F:quinone binding"/>
    <property type="evidence" value="ECO:0007669"/>
    <property type="project" value="UniProtKB-KW"/>
</dbReference>
<dbReference type="GO" id="GO:0009060">
    <property type="term" value="P:aerobic respiration"/>
    <property type="evidence" value="ECO:0000318"/>
    <property type="project" value="GO_Central"/>
</dbReference>
<dbReference type="HAMAP" id="MF_01350">
    <property type="entry name" value="NDH1_NuoH"/>
    <property type="match status" value="1"/>
</dbReference>
<dbReference type="InterPro" id="IPR001694">
    <property type="entry name" value="NADH_UbQ_OxRdtase_su1/FPO"/>
</dbReference>
<dbReference type="InterPro" id="IPR018086">
    <property type="entry name" value="NADH_UbQ_OxRdtase_su1_CS"/>
</dbReference>
<dbReference type="NCBIfam" id="NF004740">
    <property type="entry name" value="PRK06076.1-1"/>
    <property type="match status" value="1"/>
</dbReference>
<dbReference type="NCBIfam" id="NF004741">
    <property type="entry name" value="PRK06076.1-2"/>
    <property type="match status" value="1"/>
</dbReference>
<dbReference type="PANTHER" id="PTHR11432">
    <property type="entry name" value="NADH DEHYDROGENASE SUBUNIT 1"/>
    <property type="match status" value="1"/>
</dbReference>
<dbReference type="PANTHER" id="PTHR11432:SF3">
    <property type="entry name" value="NADH-UBIQUINONE OXIDOREDUCTASE CHAIN 1"/>
    <property type="match status" value="1"/>
</dbReference>
<dbReference type="Pfam" id="PF00146">
    <property type="entry name" value="NADHdh"/>
    <property type="match status" value="1"/>
</dbReference>
<dbReference type="PROSITE" id="PS00667">
    <property type="entry name" value="COMPLEX1_ND1_1"/>
    <property type="match status" value="1"/>
</dbReference>
<dbReference type="PROSITE" id="PS00668">
    <property type="entry name" value="COMPLEX1_ND1_2"/>
    <property type="match status" value="1"/>
</dbReference>
<protein>
    <recommendedName>
        <fullName evidence="1">NADH-quinone oxidoreductase subunit H</fullName>
        <ecNumber evidence="1">7.1.1.-</ecNumber>
    </recommendedName>
    <alternativeName>
        <fullName evidence="1">NADH dehydrogenase I subunit H</fullName>
    </alternativeName>
    <alternativeName>
        <fullName evidence="1">NDH-1 subunit H</fullName>
    </alternativeName>
</protein>
<organism>
    <name type="scientific">Salmonella typhimurium (strain LT2 / SGSC1412 / ATCC 700720)</name>
    <dbReference type="NCBI Taxonomy" id="99287"/>
    <lineage>
        <taxon>Bacteria</taxon>
        <taxon>Pseudomonadati</taxon>
        <taxon>Pseudomonadota</taxon>
        <taxon>Gammaproteobacteria</taxon>
        <taxon>Enterobacterales</taxon>
        <taxon>Enterobacteriaceae</taxon>
        <taxon>Salmonella</taxon>
    </lineage>
</organism>
<comment type="function">
    <text evidence="1">NDH-1 shuttles electrons from NADH, via FMN and iron-sulfur (Fe-S) centers, to quinones in the respiratory chain. The immediate electron acceptor for the enzyme in this species is believed to be ubiquinone. Couples the redox reaction to proton translocation (for every two electrons transferred, four hydrogen ions are translocated across the cytoplasmic membrane), and thus conserves the redox energy in a proton gradient. This subunit may bind ubiquinone.</text>
</comment>
<comment type="catalytic activity">
    <reaction evidence="1">
        <text>a quinone + NADH + 5 H(+)(in) = a quinol + NAD(+) + 4 H(+)(out)</text>
        <dbReference type="Rhea" id="RHEA:57888"/>
        <dbReference type="ChEBI" id="CHEBI:15378"/>
        <dbReference type="ChEBI" id="CHEBI:24646"/>
        <dbReference type="ChEBI" id="CHEBI:57540"/>
        <dbReference type="ChEBI" id="CHEBI:57945"/>
        <dbReference type="ChEBI" id="CHEBI:132124"/>
    </reaction>
</comment>
<comment type="subunit">
    <text evidence="1">NDH-1 is composed of 13 different subunits. Subunits NuoA, H, J, K, L, M, N constitute the membrane sector of the complex.</text>
</comment>
<comment type="subcellular location">
    <subcellularLocation>
        <location evidence="1">Cell inner membrane</location>
        <topology evidence="1">Multi-pass membrane protein</topology>
    </subcellularLocation>
</comment>
<comment type="similarity">
    <text evidence="1">Belongs to the complex I subunit 1 family.</text>
</comment>
<name>NUOH_SALTY</name>
<proteinExistence type="inferred from homology"/>
<feature type="chain" id="PRO_0000117525" description="NADH-quinone oxidoreductase subunit H">
    <location>
        <begin position="1"/>
        <end position="325"/>
    </location>
</feature>
<feature type="transmembrane region" description="Helical" evidence="1">
    <location>
        <begin position="11"/>
        <end position="31"/>
    </location>
</feature>
<feature type="transmembrane region" description="Helical" evidence="1">
    <location>
        <begin position="50"/>
        <end position="69"/>
    </location>
</feature>
<feature type="transmembrane region" description="Helical" evidence="1">
    <location>
        <begin position="81"/>
        <end position="101"/>
    </location>
</feature>
<feature type="transmembrane region" description="Helical" evidence="1">
    <location>
        <begin position="114"/>
        <end position="134"/>
    </location>
</feature>
<feature type="transmembrane region" description="Helical" evidence="1">
    <location>
        <begin position="154"/>
        <end position="174"/>
    </location>
</feature>
<feature type="transmembrane region" description="Helical" evidence="1">
    <location>
        <begin position="186"/>
        <end position="206"/>
    </location>
</feature>
<feature type="transmembrane region" description="Helical" evidence="1">
    <location>
        <begin position="237"/>
        <end position="257"/>
    </location>
</feature>
<feature type="transmembrane region" description="Helical" evidence="1">
    <location>
        <begin position="265"/>
        <end position="285"/>
    </location>
</feature>
<feature type="transmembrane region" description="Helical" evidence="1">
    <location>
        <begin position="304"/>
        <end position="324"/>
    </location>
</feature>
<feature type="sequence conflict" description="In Ref. 1; AAC37140." evidence="2" ref="1">
    <original>L</original>
    <variation>W</variation>
    <location>
        <position position="117"/>
    </location>
</feature>
<feature type="sequence conflict" description="In Ref. 1; AAC37140." evidence="2" ref="1">
    <original>Q</original>
    <variation>H</variation>
    <location>
        <position position="214"/>
    </location>
</feature>
<feature type="sequence conflict" description="In Ref. 1; AAC37140." evidence="2" ref="1">
    <original>A</original>
    <variation>T</variation>
    <location>
        <position position="217"/>
    </location>
</feature>
<keyword id="KW-0997">Cell inner membrane</keyword>
<keyword id="KW-1003">Cell membrane</keyword>
<keyword id="KW-0472">Membrane</keyword>
<keyword id="KW-0520">NAD</keyword>
<keyword id="KW-0874">Quinone</keyword>
<keyword id="KW-1185">Reference proteome</keyword>
<keyword id="KW-1278">Translocase</keyword>
<keyword id="KW-0812">Transmembrane</keyword>
<keyword id="KW-1133">Transmembrane helix</keyword>
<keyword id="KW-0830">Ubiquinone</keyword>
<evidence type="ECO:0000255" key="1">
    <source>
        <dbReference type="HAMAP-Rule" id="MF_01350"/>
    </source>
</evidence>
<evidence type="ECO:0000305" key="2"/>